<dbReference type="EMBL" id="AF228104">
    <property type="protein sequence ID" value="AAF77108.1"/>
    <property type="molecule type" value="Genomic_DNA"/>
</dbReference>
<dbReference type="RefSeq" id="YP_009578397.1">
    <property type="nucleotide sequence ID" value="NC_041498.1"/>
</dbReference>
<dbReference type="GeneID" id="39704065"/>
<dbReference type="GO" id="GO:0009507">
    <property type="term" value="C:chloroplast"/>
    <property type="evidence" value="ECO:0007669"/>
    <property type="project" value="UniProtKB-SubCell"/>
</dbReference>
<dbReference type="GO" id="GO:0003723">
    <property type="term" value="F:RNA binding"/>
    <property type="evidence" value="ECO:0007669"/>
    <property type="project" value="UniProtKB-KW"/>
</dbReference>
<dbReference type="GO" id="GO:0006397">
    <property type="term" value="P:mRNA processing"/>
    <property type="evidence" value="ECO:0007669"/>
    <property type="project" value="UniProtKB-KW"/>
</dbReference>
<dbReference type="GO" id="GO:0008380">
    <property type="term" value="P:RNA splicing"/>
    <property type="evidence" value="ECO:0007669"/>
    <property type="project" value="UniProtKB-UniRule"/>
</dbReference>
<dbReference type="GO" id="GO:0008033">
    <property type="term" value="P:tRNA processing"/>
    <property type="evidence" value="ECO:0007669"/>
    <property type="project" value="UniProtKB-KW"/>
</dbReference>
<dbReference type="HAMAP" id="MF_01390">
    <property type="entry name" value="MatK"/>
    <property type="match status" value="1"/>
</dbReference>
<dbReference type="InterPro" id="IPR024937">
    <property type="entry name" value="Domain_X"/>
</dbReference>
<dbReference type="InterPro" id="IPR002866">
    <property type="entry name" value="Maturase_MatK"/>
</dbReference>
<dbReference type="InterPro" id="IPR024942">
    <property type="entry name" value="Maturase_MatK_N"/>
</dbReference>
<dbReference type="PANTHER" id="PTHR34811">
    <property type="entry name" value="MATURASE K"/>
    <property type="match status" value="1"/>
</dbReference>
<dbReference type="PANTHER" id="PTHR34811:SF1">
    <property type="entry name" value="MATURASE K"/>
    <property type="match status" value="1"/>
</dbReference>
<dbReference type="Pfam" id="PF01348">
    <property type="entry name" value="Intron_maturas2"/>
    <property type="match status" value="1"/>
</dbReference>
<dbReference type="Pfam" id="PF01824">
    <property type="entry name" value="MatK_N"/>
    <property type="match status" value="1"/>
</dbReference>
<sequence>MDEFQRYGNKHKSWQQCFLYPLFFREDLYTIAHDLYLDKSSSSEPTELSISNFFSFPTVKRLIRRIRQQNDSNSIGLFRNCDPNRFINRNRNSYSELVLEGLTVILEVSLAMQSKHFIEGMDGWKSIRSIHCIFTLMEDKFPYSNYVSDIRVPYSIHPEILVRTFRRWIRDAPSLHLLRSILHEWRNSFSAENLQKALVPPRENRRFSLFLWNSYVYECESFLVSLLKQFYHSRSLLYGSFPDRTHFDKKIKHIVIFPVKISTKRIWLLKYPFIYYVRYGERSLIALKGTHLQVKRCRYHLFNFWQYYFHLWSQPYRVCILELSKIYFYFLGHFLSFKMKTLVVRTKMLDDLLISDIIANEFNPIAPIRSILLYLTKERFCDISGQPISRLSWTNLSDDDILDRFDRMCRNIFHYYSGSINKDGLYYIKYILLLPCAKTLACKHKSTIRVVREESGSELFTKSFSKEREFIYSSFSKTCSQRERNWNSDIIQINILVNYWQKIHNKQIEK</sequence>
<name>MATK_TAXCU</name>
<comment type="function">
    <text evidence="1">Usually encoded in the trnK tRNA gene intron. Probably assists in splicing its own and other chloroplast group II introns.</text>
</comment>
<comment type="subcellular location">
    <subcellularLocation>
        <location>Plastid</location>
        <location>Chloroplast</location>
    </subcellularLocation>
</comment>
<comment type="similarity">
    <text evidence="1">Belongs to the intron maturase 2 family. MatK subfamily.</text>
</comment>
<feature type="chain" id="PRO_0000143731" description="Maturase K">
    <location>
        <begin position="1"/>
        <end position="510"/>
    </location>
</feature>
<organism>
    <name type="scientific">Taxus cuspidata</name>
    <name type="common">Japanese yew</name>
    <dbReference type="NCBI Taxonomy" id="99806"/>
    <lineage>
        <taxon>Eukaryota</taxon>
        <taxon>Viridiplantae</taxon>
        <taxon>Streptophyta</taxon>
        <taxon>Embryophyta</taxon>
        <taxon>Tracheophyta</taxon>
        <taxon>Spermatophyta</taxon>
        <taxon>Pinopsida</taxon>
        <taxon>Pinidae</taxon>
        <taxon>Conifers II</taxon>
        <taxon>Cupressales</taxon>
        <taxon>Taxaceae</taxon>
        <taxon>Taxus</taxon>
    </lineage>
</organism>
<gene>
    <name evidence="1" type="primary">matK</name>
</gene>
<protein>
    <recommendedName>
        <fullName evidence="1">Maturase K</fullName>
    </recommendedName>
    <alternativeName>
        <fullName evidence="1">Intron maturase</fullName>
    </alternativeName>
</protein>
<accession>Q7IS11</accession>
<evidence type="ECO:0000255" key="1">
    <source>
        <dbReference type="HAMAP-Rule" id="MF_01390"/>
    </source>
</evidence>
<proteinExistence type="inferred from homology"/>
<reference key="1">
    <citation type="journal article" date="2000" name="Zhi Wu Fen Lei Xue Bao">
        <title>Chloroplast matK gene phylogeny of Taxaceae and Cephalotaxaceae, with additional reference to the systematic position of Nageia.</title>
        <authorList>
            <person name="Wang X.-Q."/>
            <person name="Shu Y.-Q."/>
        </authorList>
    </citation>
    <scope>NUCLEOTIDE SEQUENCE [GENOMIC DNA]</scope>
</reference>
<geneLocation type="chloroplast"/>
<keyword id="KW-0150">Chloroplast</keyword>
<keyword id="KW-0507">mRNA processing</keyword>
<keyword id="KW-0934">Plastid</keyword>
<keyword id="KW-0694">RNA-binding</keyword>
<keyword id="KW-0819">tRNA processing</keyword>